<comment type="similarity">
    <text evidence="1">Belongs to the eukaryotic ribosomal protein eL32 family.</text>
</comment>
<gene>
    <name type="primary">RPL32</name>
</gene>
<accession>P51421</accession>
<sequence length="42" mass="4709">TYCAEIAHNVSTKKRKEIVERAAQLDIVVPTKLARAPSQEDE</sequence>
<proteinExistence type="evidence at transcript level"/>
<protein>
    <recommendedName>
        <fullName evidence="1">Large ribosomal subunit protein eL32</fullName>
    </recommendedName>
    <alternativeName>
        <fullName>60S ribosomal protein L32</fullName>
    </alternativeName>
</protein>
<organism>
    <name type="scientific">Zea mays</name>
    <name type="common">Maize</name>
    <dbReference type="NCBI Taxonomy" id="4577"/>
    <lineage>
        <taxon>Eukaryota</taxon>
        <taxon>Viridiplantae</taxon>
        <taxon>Streptophyta</taxon>
        <taxon>Embryophyta</taxon>
        <taxon>Tracheophyta</taxon>
        <taxon>Spermatophyta</taxon>
        <taxon>Magnoliopsida</taxon>
        <taxon>Liliopsida</taxon>
        <taxon>Poales</taxon>
        <taxon>Poaceae</taxon>
        <taxon>PACMAD clade</taxon>
        <taxon>Panicoideae</taxon>
        <taxon>Andropogonodae</taxon>
        <taxon>Andropogoneae</taxon>
        <taxon>Tripsacinae</taxon>
        <taxon>Zea</taxon>
    </lineage>
</organism>
<keyword id="KW-1185">Reference proteome</keyword>
<keyword id="KW-0687">Ribonucleoprotein</keyword>
<keyword id="KW-0689">Ribosomal protein</keyword>
<name>RL32_MAIZE</name>
<reference key="1">
    <citation type="submission" date="1993-11" db="EMBL/GenBank/DDBJ databases">
        <authorList>
            <person name="Bates E.E.M."/>
            <person name="Vergne P."/>
            <person name="Dumas C."/>
        </authorList>
    </citation>
    <scope>NUCLEOTIDE SEQUENCE [MRNA]</scope>
    <source>
        <strain>cv. HD5 X HD7</strain>
    </source>
</reference>
<dbReference type="EMBL" id="X75646">
    <property type="protein sequence ID" value="CAA53301.1"/>
    <property type="molecule type" value="mRNA"/>
</dbReference>
<dbReference type="PIR" id="S38633">
    <property type="entry name" value="S38633"/>
</dbReference>
<dbReference type="SMR" id="P51421"/>
<dbReference type="STRING" id="4577.P51421"/>
<dbReference type="PaxDb" id="4577-AC197246.3_FGP003"/>
<dbReference type="MaizeGDB" id="61651"/>
<dbReference type="eggNOG" id="KOG0878">
    <property type="taxonomic scope" value="Eukaryota"/>
</dbReference>
<dbReference type="InParanoid" id="P51421"/>
<dbReference type="Proteomes" id="UP000007305">
    <property type="component" value="Unplaced"/>
</dbReference>
<dbReference type="GO" id="GO:1990904">
    <property type="term" value="C:ribonucleoprotein complex"/>
    <property type="evidence" value="ECO:0007669"/>
    <property type="project" value="UniProtKB-KW"/>
</dbReference>
<dbReference type="GO" id="GO:0005840">
    <property type="term" value="C:ribosome"/>
    <property type="evidence" value="ECO:0007669"/>
    <property type="project" value="UniProtKB-KW"/>
</dbReference>
<dbReference type="GO" id="GO:0003735">
    <property type="term" value="F:structural constituent of ribosome"/>
    <property type="evidence" value="ECO:0007669"/>
    <property type="project" value="InterPro"/>
</dbReference>
<dbReference type="GO" id="GO:0006412">
    <property type="term" value="P:translation"/>
    <property type="evidence" value="ECO:0007669"/>
    <property type="project" value="InterPro"/>
</dbReference>
<dbReference type="InterPro" id="IPR001515">
    <property type="entry name" value="Ribosomal_eL32"/>
</dbReference>
<dbReference type="InterPro" id="IPR036351">
    <property type="entry name" value="Ribosomal_eL32_sf"/>
</dbReference>
<dbReference type="PANTHER" id="PTHR23413">
    <property type="entry name" value="60S RIBOSOMAL PROTEIN L32 AND DNA-DIRECTED RNA POLYMERASE II, SUBUNIT N"/>
    <property type="match status" value="1"/>
</dbReference>
<dbReference type="PANTHER" id="PTHR23413:SF1">
    <property type="entry name" value="RIBOSOMAL PROTEIN L32"/>
    <property type="match status" value="1"/>
</dbReference>
<dbReference type="Pfam" id="PF01655">
    <property type="entry name" value="Ribosomal_L32e"/>
    <property type="match status" value="1"/>
</dbReference>
<dbReference type="SUPFAM" id="SSF52042">
    <property type="entry name" value="Ribosomal protein L32e"/>
    <property type="match status" value="1"/>
</dbReference>
<evidence type="ECO:0000305" key="1"/>
<feature type="chain" id="PRO_0000131137" description="Large ribosomal subunit protein eL32">
    <location>
        <begin position="1" status="less than"/>
        <end position="42"/>
    </location>
</feature>
<feature type="non-terminal residue">
    <location>
        <position position="1"/>
    </location>
</feature>